<gene>
    <name evidence="1" type="primary">queF</name>
    <name type="ordered locus">Plav_3151</name>
</gene>
<feature type="chain" id="PRO_1000072871" description="NADPH-dependent 7-cyano-7-deazaguanine reductase">
    <location>
        <begin position="1"/>
        <end position="154"/>
    </location>
</feature>
<feature type="region of interest" description="Disordered" evidence="2">
    <location>
        <begin position="1"/>
        <end position="31"/>
    </location>
</feature>
<feature type="compositionally biased region" description="Basic and acidic residues" evidence="2">
    <location>
        <begin position="1"/>
        <end position="11"/>
    </location>
</feature>
<feature type="active site" description="Thioimide intermediate" evidence="1">
    <location>
        <position position="52"/>
    </location>
</feature>
<feature type="active site" description="Proton donor" evidence="1">
    <location>
        <position position="59"/>
    </location>
</feature>
<feature type="binding site" evidence="1">
    <location>
        <begin position="74"/>
        <end position="76"/>
    </location>
    <ligand>
        <name>substrate</name>
    </ligand>
</feature>
<feature type="binding site" evidence="1">
    <location>
        <begin position="93"/>
        <end position="94"/>
    </location>
    <ligand>
        <name>substrate</name>
    </ligand>
</feature>
<organism>
    <name type="scientific">Parvibaculum lavamentivorans (strain DS-1 / DSM 13023 / NCIMB 13966)</name>
    <dbReference type="NCBI Taxonomy" id="402881"/>
    <lineage>
        <taxon>Bacteria</taxon>
        <taxon>Pseudomonadati</taxon>
        <taxon>Pseudomonadota</taxon>
        <taxon>Alphaproteobacteria</taxon>
        <taxon>Hyphomicrobiales</taxon>
        <taxon>Parvibaculaceae</taxon>
        <taxon>Parvibaculum</taxon>
    </lineage>
</organism>
<dbReference type="EC" id="1.7.1.13" evidence="1"/>
<dbReference type="EMBL" id="CP000774">
    <property type="protein sequence ID" value="ABS64757.1"/>
    <property type="molecule type" value="Genomic_DNA"/>
</dbReference>
<dbReference type="RefSeq" id="WP_012112079.1">
    <property type="nucleotide sequence ID" value="NC_009719.1"/>
</dbReference>
<dbReference type="SMR" id="A7HXX4"/>
<dbReference type="STRING" id="402881.Plav_3151"/>
<dbReference type="KEGG" id="pla:Plav_3151"/>
<dbReference type="eggNOG" id="COG0780">
    <property type="taxonomic scope" value="Bacteria"/>
</dbReference>
<dbReference type="HOGENOM" id="CLU_102489_0_1_5"/>
<dbReference type="OrthoDB" id="9789995at2"/>
<dbReference type="UniPathway" id="UPA00392"/>
<dbReference type="Proteomes" id="UP000006377">
    <property type="component" value="Chromosome"/>
</dbReference>
<dbReference type="GO" id="GO:0005737">
    <property type="term" value="C:cytoplasm"/>
    <property type="evidence" value="ECO:0007669"/>
    <property type="project" value="UniProtKB-SubCell"/>
</dbReference>
<dbReference type="GO" id="GO:0033739">
    <property type="term" value="F:preQ1 synthase activity"/>
    <property type="evidence" value="ECO:0007669"/>
    <property type="project" value="UniProtKB-UniRule"/>
</dbReference>
<dbReference type="GO" id="GO:0008616">
    <property type="term" value="P:queuosine biosynthetic process"/>
    <property type="evidence" value="ECO:0007669"/>
    <property type="project" value="UniProtKB-UniRule"/>
</dbReference>
<dbReference type="GO" id="GO:0006400">
    <property type="term" value="P:tRNA modification"/>
    <property type="evidence" value="ECO:0007669"/>
    <property type="project" value="UniProtKB-UniRule"/>
</dbReference>
<dbReference type="Gene3D" id="3.30.1130.10">
    <property type="match status" value="1"/>
</dbReference>
<dbReference type="HAMAP" id="MF_00818">
    <property type="entry name" value="QueF_type1"/>
    <property type="match status" value="1"/>
</dbReference>
<dbReference type="InterPro" id="IPR043133">
    <property type="entry name" value="GTP-CH-I_C/QueF"/>
</dbReference>
<dbReference type="InterPro" id="IPR050084">
    <property type="entry name" value="NADPH_dep_7-cyano-7-deazaG_red"/>
</dbReference>
<dbReference type="InterPro" id="IPR029500">
    <property type="entry name" value="QueF"/>
</dbReference>
<dbReference type="InterPro" id="IPR016856">
    <property type="entry name" value="QueF_type1"/>
</dbReference>
<dbReference type="NCBIfam" id="TIGR03139">
    <property type="entry name" value="QueF-II"/>
    <property type="match status" value="1"/>
</dbReference>
<dbReference type="PANTHER" id="PTHR34354">
    <property type="entry name" value="NADPH-DEPENDENT 7-CYANO-7-DEAZAGUANINE REDUCTASE"/>
    <property type="match status" value="1"/>
</dbReference>
<dbReference type="PANTHER" id="PTHR34354:SF1">
    <property type="entry name" value="NADPH-DEPENDENT 7-CYANO-7-DEAZAGUANINE REDUCTASE"/>
    <property type="match status" value="1"/>
</dbReference>
<dbReference type="Pfam" id="PF14489">
    <property type="entry name" value="QueF"/>
    <property type="match status" value="1"/>
</dbReference>
<dbReference type="PIRSF" id="PIRSF027377">
    <property type="entry name" value="Nitrile_oxidored_QueF"/>
    <property type="match status" value="1"/>
</dbReference>
<dbReference type="SUPFAM" id="SSF55620">
    <property type="entry name" value="Tetrahydrobiopterin biosynthesis enzymes-like"/>
    <property type="match status" value="1"/>
</dbReference>
<accession>A7HXX4</accession>
<sequence>MAKKPVKDLKQLGHATPVPASPEEATLERVPNPHPDANYVARFTVPEFTSLCPVTGQPDFAHLVIDYVPGKWLIESKSLKLYLQSFRNHGAFHEDCTLAIGKRLAGTLAPKWLRIGGYWYPRGGIPIDVFWQKGKLPAGVWVPDQGVAPYRGRG</sequence>
<proteinExistence type="inferred from homology"/>
<reference key="1">
    <citation type="journal article" date="2011" name="Stand. Genomic Sci.">
        <title>Complete genome sequence of Parvibaculum lavamentivorans type strain (DS-1(T)).</title>
        <authorList>
            <person name="Schleheck D."/>
            <person name="Weiss M."/>
            <person name="Pitluck S."/>
            <person name="Bruce D."/>
            <person name="Land M.L."/>
            <person name="Han S."/>
            <person name="Saunders E."/>
            <person name="Tapia R."/>
            <person name="Detter C."/>
            <person name="Brettin T."/>
            <person name="Han J."/>
            <person name="Woyke T."/>
            <person name="Goodwin L."/>
            <person name="Pennacchio L."/>
            <person name="Nolan M."/>
            <person name="Cook A.M."/>
            <person name="Kjelleberg S."/>
            <person name="Thomas T."/>
        </authorList>
    </citation>
    <scope>NUCLEOTIDE SEQUENCE [LARGE SCALE GENOMIC DNA]</scope>
    <source>
        <strain>DS-1 / DSM 13023 / NCIMB 13966</strain>
    </source>
</reference>
<comment type="function">
    <text evidence="1">Catalyzes the NADPH-dependent reduction of 7-cyano-7-deazaguanine (preQ0) to 7-aminomethyl-7-deazaguanine (preQ1).</text>
</comment>
<comment type="catalytic activity">
    <reaction evidence="1">
        <text>7-aminomethyl-7-carbaguanine + 2 NADP(+) = 7-cyano-7-deazaguanine + 2 NADPH + 3 H(+)</text>
        <dbReference type="Rhea" id="RHEA:13409"/>
        <dbReference type="ChEBI" id="CHEBI:15378"/>
        <dbReference type="ChEBI" id="CHEBI:45075"/>
        <dbReference type="ChEBI" id="CHEBI:57783"/>
        <dbReference type="ChEBI" id="CHEBI:58349"/>
        <dbReference type="ChEBI" id="CHEBI:58703"/>
        <dbReference type="EC" id="1.7.1.13"/>
    </reaction>
</comment>
<comment type="pathway">
    <text evidence="1">tRNA modification; tRNA-queuosine biosynthesis.</text>
</comment>
<comment type="subcellular location">
    <subcellularLocation>
        <location evidence="1">Cytoplasm</location>
    </subcellularLocation>
</comment>
<comment type="similarity">
    <text evidence="1">Belongs to the GTP cyclohydrolase I family. QueF type 1 subfamily.</text>
</comment>
<protein>
    <recommendedName>
        <fullName evidence="1">NADPH-dependent 7-cyano-7-deazaguanine reductase</fullName>
        <ecNumber evidence="1">1.7.1.13</ecNumber>
    </recommendedName>
    <alternativeName>
        <fullName evidence="1">7-cyano-7-carbaguanine reductase</fullName>
    </alternativeName>
    <alternativeName>
        <fullName evidence="1">NADPH-dependent nitrile oxidoreductase</fullName>
    </alternativeName>
    <alternativeName>
        <fullName evidence="1">PreQ(0) reductase</fullName>
    </alternativeName>
</protein>
<evidence type="ECO:0000255" key="1">
    <source>
        <dbReference type="HAMAP-Rule" id="MF_00818"/>
    </source>
</evidence>
<evidence type="ECO:0000256" key="2">
    <source>
        <dbReference type="SAM" id="MobiDB-lite"/>
    </source>
</evidence>
<keyword id="KW-0963">Cytoplasm</keyword>
<keyword id="KW-0521">NADP</keyword>
<keyword id="KW-0560">Oxidoreductase</keyword>
<keyword id="KW-0671">Queuosine biosynthesis</keyword>
<keyword id="KW-1185">Reference proteome</keyword>
<name>QUEF_PARL1</name>